<feature type="chain" id="PRO_0000280844" description="Enolase 1">
    <location>
        <begin position="1"/>
        <end position="437"/>
    </location>
</feature>
<feature type="active site" description="Proton donor" evidence="1">
    <location>
        <position position="206"/>
    </location>
</feature>
<feature type="active site" description="Proton acceptor" evidence="1">
    <location>
        <position position="341"/>
    </location>
</feature>
<feature type="binding site" evidence="1">
    <location>
        <position position="164"/>
    </location>
    <ligand>
        <name>(2R)-2-phosphoglycerate</name>
        <dbReference type="ChEBI" id="CHEBI:58289"/>
    </ligand>
</feature>
<feature type="binding site" evidence="1">
    <location>
        <position position="244"/>
    </location>
    <ligand>
        <name>Mg(2+)</name>
        <dbReference type="ChEBI" id="CHEBI:18420"/>
    </ligand>
</feature>
<feature type="binding site" evidence="1">
    <location>
        <position position="289"/>
    </location>
    <ligand>
        <name>Mg(2+)</name>
        <dbReference type="ChEBI" id="CHEBI:18420"/>
    </ligand>
</feature>
<feature type="binding site" evidence="1">
    <location>
        <position position="316"/>
    </location>
    <ligand>
        <name>Mg(2+)</name>
        <dbReference type="ChEBI" id="CHEBI:18420"/>
    </ligand>
</feature>
<feature type="binding site" evidence="1">
    <location>
        <position position="341"/>
    </location>
    <ligand>
        <name>(2R)-2-phosphoglycerate</name>
        <dbReference type="ChEBI" id="CHEBI:58289"/>
    </ligand>
</feature>
<feature type="binding site" evidence="1">
    <location>
        <position position="370"/>
    </location>
    <ligand>
        <name>(2R)-2-phosphoglycerate</name>
        <dbReference type="ChEBI" id="CHEBI:58289"/>
    </ligand>
</feature>
<feature type="binding site" evidence="1">
    <location>
        <position position="371"/>
    </location>
    <ligand>
        <name>(2R)-2-phosphoglycerate</name>
        <dbReference type="ChEBI" id="CHEBI:58289"/>
    </ligand>
</feature>
<feature type="binding site" evidence="1">
    <location>
        <position position="392"/>
    </location>
    <ligand>
        <name>(2R)-2-phosphoglycerate</name>
        <dbReference type="ChEBI" id="CHEBI:58289"/>
    </ligand>
</feature>
<accession>Q24YW4</accession>
<protein>
    <recommendedName>
        <fullName evidence="1">Enolase 1</fullName>
        <ecNumber evidence="1">4.2.1.11</ecNumber>
    </recommendedName>
    <alternativeName>
        <fullName evidence="1">2-phospho-D-glycerate hydro-lyase 1</fullName>
    </alternativeName>
    <alternativeName>
        <fullName evidence="1">2-phosphoglycerate dehydratase 1</fullName>
    </alternativeName>
</protein>
<evidence type="ECO:0000255" key="1">
    <source>
        <dbReference type="HAMAP-Rule" id="MF_00318"/>
    </source>
</evidence>
<evidence type="ECO:0000305" key="2"/>
<reference key="1">
    <citation type="journal article" date="2006" name="J. Bacteriol.">
        <title>Complete genome sequence of the dehalorespiring bacterium Desulfitobacterium hafniense Y51 and comparison with Dehalococcoides ethenogenes 195.</title>
        <authorList>
            <person name="Nonaka H."/>
            <person name="Keresztes G."/>
            <person name="Shinoda Y."/>
            <person name="Ikenaga Y."/>
            <person name="Abe M."/>
            <person name="Naito K."/>
            <person name="Inatomi K."/>
            <person name="Furukawa K."/>
            <person name="Inui M."/>
            <person name="Yukawa H."/>
        </authorList>
    </citation>
    <scope>NUCLEOTIDE SEQUENCE [LARGE SCALE GENOMIC DNA]</scope>
    <source>
        <strain>Y51</strain>
    </source>
</reference>
<keyword id="KW-0963">Cytoplasm</keyword>
<keyword id="KW-0324">Glycolysis</keyword>
<keyword id="KW-0456">Lyase</keyword>
<keyword id="KW-0460">Magnesium</keyword>
<keyword id="KW-0479">Metal-binding</keyword>
<keyword id="KW-1185">Reference proteome</keyword>
<keyword id="KW-0964">Secreted</keyword>
<name>ENO1_DESHY</name>
<gene>
    <name evidence="1" type="primary">eno1</name>
    <name type="ordered locus">DSY0989</name>
</gene>
<organism>
    <name type="scientific">Desulfitobacterium hafniense (strain Y51)</name>
    <dbReference type="NCBI Taxonomy" id="138119"/>
    <lineage>
        <taxon>Bacteria</taxon>
        <taxon>Bacillati</taxon>
        <taxon>Bacillota</taxon>
        <taxon>Clostridia</taxon>
        <taxon>Eubacteriales</taxon>
        <taxon>Desulfitobacteriaceae</taxon>
        <taxon>Desulfitobacterium</taxon>
    </lineage>
</organism>
<proteinExistence type="inferred from homology"/>
<dbReference type="EC" id="4.2.1.11" evidence="1"/>
<dbReference type="EMBL" id="AP008230">
    <property type="protein sequence ID" value="BAE82778.1"/>
    <property type="molecule type" value="Genomic_DNA"/>
</dbReference>
<dbReference type="RefSeq" id="WP_011459461.1">
    <property type="nucleotide sequence ID" value="NC_007907.1"/>
</dbReference>
<dbReference type="SMR" id="Q24YW4"/>
<dbReference type="STRING" id="138119.DSY0989"/>
<dbReference type="KEGG" id="dsy:DSY0989"/>
<dbReference type="eggNOG" id="COG0148">
    <property type="taxonomic scope" value="Bacteria"/>
</dbReference>
<dbReference type="HOGENOM" id="CLU_031223_2_1_9"/>
<dbReference type="UniPathway" id="UPA00109">
    <property type="reaction ID" value="UER00187"/>
</dbReference>
<dbReference type="Proteomes" id="UP000001946">
    <property type="component" value="Chromosome"/>
</dbReference>
<dbReference type="GO" id="GO:0009986">
    <property type="term" value="C:cell surface"/>
    <property type="evidence" value="ECO:0007669"/>
    <property type="project" value="UniProtKB-SubCell"/>
</dbReference>
<dbReference type="GO" id="GO:0005576">
    <property type="term" value="C:extracellular region"/>
    <property type="evidence" value="ECO:0007669"/>
    <property type="project" value="UniProtKB-SubCell"/>
</dbReference>
<dbReference type="GO" id="GO:0000015">
    <property type="term" value="C:phosphopyruvate hydratase complex"/>
    <property type="evidence" value="ECO:0007669"/>
    <property type="project" value="InterPro"/>
</dbReference>
<dbReference type="GO" id="GO:0000287">
    <property type="term" value="F:magnesium ion binding"/>
    <property type="evidence" value="ECO:0007669"/>
    <property type="project" value="UniProtKB-UniRule"/>
</dbReference>
<dbReference type="GO" id="GO:0004634">
    <property type="term" value="F:phosphopyruvate hydratase activity"/>
    <property type="evidence" value="ECO:0007669"/>
    <property type="project" value="UniProtKB-UniRule"/>
</dbReference>
<dbReference type="GO" id="GO:0006096">
    <property type="term" value="P:glycolytic process"/>
    <property type="evidence" value="ECO:0007669"/>
    <property type="project" value="UniProtKB-UniRule"/>
</dbReference>
<dbReference type="CDD" id="cd03313">
    <property type="entry name" value="enolase"/>
    <property type="match status" value="1"/>
</dbReference>
<dbReference type="Gene3D" id="3.20.20.120">
    <property type="entry name" value="Enolase-like C-terminal domain"/>
    <property type="match status" value="1"/>
</dbReference>
<dbReference type="Gene3D" id="3.30.390.10">
    <property type="entry name" value="Enolase-like, N-terminal domain"/>
    <property type="match status" value="1"/>
</dbReference>
<dbReference type="HAMAP" id="MF_00318">
    <property type="entry name" value="Enolase"/>
    <property type="match status" value="1"/>
</dbReference>
<dbReference type="InterPro" id="IPR000941">
    <property type="entry name" value="Enolase"/>
</dbReference>
<dbReference type="InterPro" id="IPR036849">
    <property type="entry name" value="Enolase-like_C_sf"/>
</dbReference>
<dbReference type="InterPro" id="IPR029017">
    <property type="entry name" value="Enolase-like_N"/>
</dbReference>
<dbReference type="InterPro" id="IPR020810">
    <property type="entry name" value="Enolase_C"/>
</dbReference>
<dbReference type="InterPro" id="IPR020809">
    <property type="entry name" value="Enolase_CS"/>
</dbReference>
<dbReference type="InterPro" id="IPR020811">
    <property type="entry name" value="Enolase_N"/>
</dbReference>
<dbReference type="NCBIfam" id="TIGR01060">
    <property type="entry name" value="eno"/>
    <property type="match status" value="1"/>
</dbReference>
<dbReference type="PANTHER" id="PTHR11902">
    <property type="entry name" value="ENOLASE"/>
    <property type="match status" value="1"/>
</dbReference>
<dbReference type="PANTHER" id="PTHR11902:SF1">
    <property type="entry name" value="ENOLASE"/>
    <property type="match status" value="1"/>
</dbReference>
<dbReference type="Pfam" id="PF00113">
    <property type="entry name" value="Enolase_C"/>
    <property type="match status" value="1"/>
</dbReference>
<dbReference type="Pfam" id="PF03952">
    <property type="entry name" value="Enolase_N"/>
    <property type="match status" value="1"/>
</dbReference>
<dbReference type="PIRSF" id="PIRSF001400">
    <property type="entry name" value="Enolase"/>
    <property type="match status" value="1"/>
</dbReference>
<dbReference type="PRINTS" id="PR00148">
    <property type="entry name" value="ENOLASE"/>
</dbReference>
<dbReference type="SFLD" id="SFLDS00001">
    <property type="entry name" value="Enolase"/>
    <property type="match status" value="1"/>
</dbReference>
<dbReference type="SFLD" id="SFLDF00002">
    <property type="entry name" value="enolase"/>
    <property type="match status" value="1"/>
</dbReference>
<dbReference type="SMART" id="SM01192">
    <property type="entry name" value="Enolase_C"/>
    <property type="match status" value="1"/>
</dbReference>
<dbReference type="SMART" id="SM01193">
    <property type="entry name" value="Enolase_N"/>
    <property type="match status" value="1"/>
</dbReference>
<dbReference type="SUPFAM" id="SSF51604">
    <property type="entry name" value="Enolase C-terminal domain-like"/>
    <property type="match status" value="1"/>
</dbReference>
<dbReference type="SUPFAM" id="SSF54826">
    <property type="entry name" value="Enolase N-terminal domain-like"/>
    <property type="match status" value="1"/>
</dbReference>
<dbReference type="PROSITE" id="PS00164">
    <property type="entry name" value="ENOLASE"/>
    <property type="match status" value="1"/>
</dbReference>
<comment type="function">
    <text evidence="1">Catalyzes the reversible conversion of 2-phosphoglycerate (2-PG) into phosphoenolpyruvate (PEP). It is essential for the degradation of carbohydrates via glycolysis.</text>
</comment>
<comment type="catalytic activity">
    <reaction evidence="1">
        <text>(2R)-2-phosphoglycerate = phosphoenolpyruvate + H2O</text>
        <dbReference type="Rhea" id="RHEA:10164"/>
        <dbReference type="ChEBI" id="CHEBI:15377"/>
        <dbReference type="ChEBI" id="CHEBI:58289"/>
        <dbReference type="ChEBI" id="CHEBI:58702"/>
        <dbReference type="EC" id="4.2.1.11"/>
    </reaction>
</comment>
<comment type="cofactor">
    <cofactor evidence="1">
        <name>Mg(2+)</name>
        <dbReference type="ChEBI" id="CHEBI:18420"/>
    </cofactor>
    <text evidence="1">Binds a second Mg(2+) ion via substrate during catalysis.</text>
</comment>
<comment type="pathway">
    <text evidence="1">Carbohydrate degradation; glycolysis; pyruvate from D-glyceraldehyde 3-phosphate: step 4/5.</text>
</comment>
<comment type="subcellular location">
    <subcellularLocation>
        <location evidence="1">Cytoplasm</location>
    </subcellularLocation>
    <subcellularLocation>
        <location evidence="1">Secreted</location>
    </subcellularLocation>
    <subcellularLocation>
        <location evidence="1">Cell surface</location>
    </subcellularLocation>
    <text evidence="1">Fractions of enolase are present in both the cytoplasm and on the cell surface.</text>
</comment>
<comment type="similarity">
    <text evidence="1">Belongs to the enolase family.</text>
</comment>
<comment type="caution">
    <text evidence="2">Asp-165 is present instead of the conserved Glu which is expected to be a substrate-binding residue.</text>
</comment>
<comment type="caution">
    <text evidence="2">Ala-369 is present instead of the conserved His which is expected to be part of the substrate-binding region.</text>
</comment>
<sequence length="437" mass="47492">MEGFKIKSVKARQVFDSRANPTVEVDITLKDGTVGRGIVPSGASTGLFEAVELRDGEETFDGKGVSKAIHHVNEQLAPLLLDMDVRDQKAIDSRLIEIDGTPNKSRLGANAILGCSMAACWAGANYYKVPLYRYLGGSAANKLPVPMVQIIGGGAHADNVIDIQDFLVIPTSAPTFSEGYEMVVNVYNAAKMIFKGAGKPVSIADEGGLWPTGFQSNEEGLKLLCESIELAGYTPGQDLGIALDIASSEFYDPERGTYRLELEKKTLTKEEMVGMLSDWVDNYPIISIEDGMSELDWEGNLLLTQKLGKKIQLIGDDLFTTNIERIRKGVEMKVDNAVLIKMNQIGTITETIETIEFTQNHGYLPVVSARSGETEDCTIVHLAIATNAGQLKVGSAARSERTAKWNEVLRIEEALGSSARYPSKGVFAAAGIQFNQY</sequence>